<protein>
    <recommendedName>
        <fullName evidence="1">RNA-binding protein Hfq</fullName>
    </recommendedName>
</protein>
<sequence length="90" mass="9939">MTKASASLQDGFLNLLRRENIPATIYLVNGYQLKGYIRGFDNFTVAVEVDGRVQLVYKHALSTITPARPLPVSVSQIMRAGEGQEVEGEE</sequence>
<gene>
    <name evidence="1" type="primary">hfq</name>
    <name type="ordered locus">STH1746</name>
</gene>
<dbReference type="EMBL" id="AP006840">
    <property type="protein sequence ID" value="BAD40731.1"/>
    <property type="molecule type" value="Genomic_DNA"/>
</dbReference>
<dbReference type="RefSeq" id="WP_011195874.1">
    <property type="nucleotide sequence ID" value="NC_006177.1"/>
</dbReference>
<dbReference type="SMR" id="Q67NL2"/>
<dbReference type="STRING" id="292459.STH1746"/>
<dbReference type="KEGG" id="sth:STH1746"/>
<dbReference type="eggNOG" id="COG1923">
    <property type="taxonomic scope" value="Bacteria"/>
</dbReference>
<dbReference type="HOGENOM" id="CLU_113688_3_0_9"/>
<dbReference type="OrthoDB" id="9799751at2"/>
<dbReference type="Proteomes" id="UP000000417">
    <property type="component" value="Chromosome"/>
</dbReference>
<dbReference type="GO" id="GO:0005829">
    <property type="term" value="C:cytosol"/>
    <property type="evidence" value="ECO:0007669"/>
    <property type="project" value="TreeGrafter"/>
</dbReference>
<dbReference type="GO" id="GO:0003723">
    <property type="term" value="F:RNA binding"/>
    <property type="evidence" value="ECO:0007669"/>
    <property type="project" value="UniProtKB-UniRule"/>
</dbReference>
<dbReference type="GO" id="GO:0006355">
    <property type="term" value="P:regulation of DNA-templated transcription"/>
    <property type="evidence" value="ECO:0007669"/>
    <property type="project" value="InterPro"/>
</dbReference>
<dbReference type="GO" id="GO:0043487">
    <property type="term" value="P:regulation of RNA stability"/>
    <property type="evidence" value="ECO:0007669"/>
    <property type="project" value="TreeGrafter"/>
</dbReference>
<dbReference type="GO" id="GO:0045974">
    <property type="term" value="P:regulation of translation, ncRNA-mediated"/>
    <property type="evidence" value="ECO:0007669"/>
    <property type="project" value="TreeGrafter"/>
</dbReference>
<dbReference type="CDD" id="cd01716">
    <property type="entry name" value="Hfq"/>
    <property type="match status" value="1"/>
</dbReference>
<dbReference type="Gene3D" id="2.30.30.100">
    <property type="match status" value="1"/>
</dbReference>
<dbReference type="HAMAP" id="MF_00436">
    <property type="entry name" value="Hfq"/>
    <property type="match status" value="1"/>
</dbReference>
<dbReference type="InterPro" id="IPR005001">
    <property type="entry name" value="Hfq"/>
</dbReference>
<dbReference type="InterPro" id="IPR010920">
    <property type="entry name" value="LSM_dom_sf"/>
</dbReference>
<dbReference type="InterPro" id="IPR047575">
    <property type="entry name" value="Sm"/>
</dbReference>
<dbReference type="NCBIfam" id="TIGR02383">
    <property type="entry name" value="Hfq"/>
    <property type="match status" value="1"/>
</dbReference>
<dbReference type="NCBIfam" id="NF001602">
    <property type="entry name" value="PRK00395.1"/>
    <property type="match status" value="1"/>
</dbReference>
<dbReference type="PANTHER" id="PTHR34772">
    <property type="entry name" value="RNA-BINDING PROTEIN HFQ"/>
    <property type="match status" value="1"/>
</dbReference>
<dbReference type="PANTHER" id="PTHR34772:SF1">
    <property type="entry name" value="RNA-BINDING PROTEIN HFQ"/>
    <property type="match status" value="1"/>
</dbReference>
<dbReference type="Pfam" id="PF17209">
    <property type="entry name" value="Hfq"/>
    <property type="match status" value="1"/>
</dbReference>
<dbReference type="SUPFAM" id="SSF50182">
    <property type="entry name" value="Sm-like ribonucleoproteins"/>
    <property type="match status" value="1"/>
</dbReference>
<dbReference type="PROSITE" id="PS52002">
    <property type="entry name" value="SM"/>
    <property type="match status" value="1"/>
</dbReference>
<keyword id="KW-1185">Reference proteome</keyword>
<keyword id="KW-0694">RNA-binding</keyword>
<keyword id="KW-0346">Stress response</keyword>
<reference key="1">
    <citation type="journal article" date="2004" name="Nucleic Acids Res.">
        <title>Genome sequence of Symbiobacterium thermophilum, an uncultivable bacterium that depends on microbial commensalism.</title>
        <authorList>
            <person name="Ueda K."/>
            <person name="Yamashita A."/>
            <person name="Ishikawa J."/>
            <person name="Shimada M."/>
            <person name="Watsuji T."/>
            <person name="Morimura K."/>
            <person name="Ikeda H."/>
            <person name="Hattori M."/>
            <person name="Beppu T."/>
        </authorList>
    </citation>
    <scope>NUCLEOTIDE SEQUENCE [LARGE SCALE GENOMIC DNA]</scope>
    <source>
        <strain>DSM 24528 / JCM 14929 / IAM 14863 / T</strain>
    </source>
</reference>
<feature type="chain" id="PRO_0000095663" description="RNA-binding protein Hfq">
    <location>
        <begin position="1"/>
        <end position="90"/>
    </location>
</feature>
<feature type="domain" description="Sm" evidence="2">
    <location>
        <begin position="10"/>
        <end position="70"/>
    </location>
</feature>
<organism>
    <name type="scientific">Symbiobacterium thermophilum (strain DSM 24528 / JCM 14929 / IAM 14863 / T)</name>
    <dbReference type="NCBI Taxonomy" id="292459"/>
    <lineage>
        <taxon>Bacteria</taxon>
        <taxon>Bacillati</taxon>
        <taxon>Bacillota</taxon>
        <taxon>Clostridia</taxon>
        <taxon>Eubacteriales</taxon>
        <taxon>Symbiobacteriaceae</taxon>
        <taxon>Symbiobacterium</taxon>
    </lineage>
</organism>
<comment type="function">
    <text evidence="1">RNA chaperone that binds small regulatory RNA (sRNAs) and mRNAs to facilitate mRNA translational regulation in response to envelope stress, environmental stress and changes in metabolite concentrations. Also binds with high specificity to tRNAs.</text>
</comment>
<comment type="subunit">
    <text evidence="1">Homohexamer.</text>
</comment>
<comment type="similarity">
    <text evidence="1">Belongs to the Hfq family.</text>
</comment>
<name>HFQ_SYMTH</name>
<accession>Q67NL2</accession>
<evidence type="ECO:0000255" key="1">
    <source>
        <dbReference type="HAMAP-Rule" id="MF_00436"/>
    </source>
</evidence>
<evidence type="ECO:0000255" key="2">
    <source>
        <dbReference type="PROSITE-ProRule" id="PRU01346"/>
    </source>
</evidence>
<proteinExistence type="inferred from homology"/>